<accession>P0DX74</accession>
<dbReference type="PDB" id="7TB5">
    <property type="method" value="X-ray"/>
    <property type="resolution" value="2.30 A"/>
    <property type="chains" value="A=1-299"/>
</dbReference>
<dbReference type="PDBsum" id="7TB5"/>
<dbReference type="SMR" id="P0DX74"/>
<dbReference type="GO" id="GO:0003677">
    <property type="term" value="F:DNA binding"/>
    <property type="evidence" value="ECO:0007669"/>
    <property type="project" value="UniProtKB-KW"/>
</dbReference>
<dbReference type="GO" id="GO:0051607">
    <property type="term" value="P:defense response to virus"/>
    <property type="evidence" value="ECO:0007669"/>
    <property type="project" value="UniProtKB-KW"/>
</dbReference>
<dbReference type="InterPro" id="IPR016634">
    <property type="entry name" value="CapW-like"/>
</dbReference>
<dbReference type="InterPro" id="IPR051534">
    <property type="entry name" value="CBASS_pafABC_assoc_protein"/>
</dbReference>
<dbReference type="InterPro" id="IPR026881">
    <property type="entry name" value="WYL_dom"/>
</dbReference>
<dbReference type="PANTHER" id="PTHR34580">
    <property type="match status" value="1"/>
</dbReference>
<dbReference type="PANTHER" id="PTHR34580:SF3">
    <property type="entry name" value="PROTEIN PAFB"/>
    <property type="match status" value="1"/>
</dbReference>
<dbReference type="Pfam" id="PF13280">
    <property type="entry name" value="WYL"/>
    <property type="match status" value="1"/>
</dbReference>
<dbReference type="PIRSF" id="PIRSF015558">
    <property type="entry name" value="Txn_reg_DeoR_prd"/>
    <property type="match status" value="1"/>
</dbReference>
<dbReference type="PROSITE" id="PS52050">
    <property type="entry name" value="WYL"/>
    <property type="match status" value="1"/>
</dbReference>
<feature type="chain" id="PRO_0000459332" description="DNA-binding transcriptional repressor CapW">
    <location>
        <begin position="1"/>
        <end position="299"/>
    </location>
</feature>
<feature type="domain" description="WYL" evidence="2">
    <location>
        <begin position="131"/>
        <end position="211"/>
    </location>
</feature>
<feature type="region of interest" description="Winged HTH domain" evidence="4">
    <location>
        <begin position="1"/>
        <end position="95"/>
    </location>
</feature>
<feature type="region of interest" description="Disordered" evidence="3">
    <location>
        <begin position="1"/>
        <end position="22"/>
    </location>
</feature>
<feature type="region of interest" description="WYL domain" evidence="4">
    <location>
        <begin position="96"/>
        <end position="207"/>
    </location>
</feature>
<feature type="region of interest" description="Probable ligand-binding region" evidence="7">
    <location>
        <begin position="156"/>
        <end position="200"/>
    </location>
</feature>
<feature type="region of interest" description="WCX domain" evidence="4">
    <location>
        <begin position="208"/>
        <end position="299"/>
    </location>
</feature>
<feature type="helix" evidence="9">
    <location>
        <begin position="17"/>
        <end position="37"/>
    </location>
</feature>
<feature type="strand" evidence="9">
    <location>
        <begin position="39"/>
        <end position="41"/>
    </location>
</feature>
<feature type="helix" evidence="9">
    <location>
        <begin position="43"/>
        <end position="50"/>
    </location>
</feature>
<feature type="helix" evidence="9">
    <location>
        <begin position="54"/>
        <end position="67"/>
    </location>
</feature>
<feature type="strand" evidence="9">
    <location>
        <begin position="71"/>
        <end position="75"/>
    </location>
</feature>
<feature type="turn" evidence="9">
    <location>
        <begin position="76"/>
        <end position="79"/>
    </location>
</feature>
<feature type="strand" evidence="9">
    <location>
        <begin position="80"/>
        <end position="83"/>
    </location>
</feature>
<feature type="helix" evidence="9">
    <location>
        <begin position="92"/>
        <end position="95"/>
    </location>
</feature>
<feature type="helix" evidence="9">
    <location>
        <begin position="99"/>
        <end position="106"/>
    </location>
</feature>
<feature type="helix" evidence="9">
    <location>
        <begin position="136"/>
        <end position="148"/>
    </location>
</feature>
<feature type="strand" evidence="9">
    <location>
        <begin position="150"/>
        <end position="156"/>
    </location>
</feature>
<feature type="strand" evidence="9">
    <location>
        <begin position="159"/>
        <end position="161"/>
    </location>
</feature>
<feature type="strand" evidence="9">
    <location>
        <begin position="165"/>
        <end position="177"/>
    </location>
</feature>
<feature type="strand" evidence="9">
    <location>
        <begin position="180"/>
        <end position="187"/>
    </location>
</feature>
<feature type="turn" evidence="9">
    <location>
        <begin position="188"/>
        <end position="191"/>
    </location>
</feature>
<feature type="strand" evidence="9">
    <location>
        <begin position="192"/>
        <end position="197"/>
    </location>
</feature>
<feature type="helix" evidence="9">
    <location>
        <begin position="198"/>
        <end position="200"/>
    </location>
</feature>
<feature type="strand" evidence="9">
    <location>
        <begin position="201"/>
        <end position="209"/>
    </location>
</feature>
<feature type="helix" evidence="9">
    <location>
        <begin position="214"/>
        <end position="216"/>
    </location>
</feature>
<feature type="helix" evidence="9">
    <location>
        <begin position="218"/>
        <end position="221"/>
    </location>
</feature>
<feature type="strand" evidence="9">
    <location>
        <begin position="223"/>
        <end position="228"/>
    </location>
</feature>
<feature type="helix" evidence="9">
    <location>
        <begin position="236"/>
        <end position="245"/>
    </location>
</feature>
<feature type="strand" evidence="9">
    <location>
        <begin position="249"/>
        <end position="251"/>
    </location>
</feature>
<feature type="strand" evidence="9">
    <location>
        <begin position="253"/>
        <end position="258"/>
    </location>
</feature>
<feature type="helix" evidence="9">
    <location>
        <begin position="259"/>
        <end position="261"/>
    </location>
</feature>
<feature type="helix" evidence="9">
    <location>
        <begin position="262"/>
        <end position="268"/>
    </location>
</feature>
<feature type="helix" evidence="9">
    <location>
        <begin position="281"/>
        <end position="284"/>
    </location>
</feature>
<feature type="helix" evidence="9">
    <location>
        <begin position="290"/>
        <end position="295"/>
    </location>
</feature>
<proteinExistence type="evidence at protein level"/>
<gene>
    <name evidence="5" type="primary">capW</name>
</gene>
<organism>
    <name type="scientific">Pseudomonas aeruginosa</name>
    <dbReference type="NCBI Taxonomy" id="287"/>
    <lineage>
        <taxon>Bacteria</taxon>
        <taxon>Pseudomonadati</taxon>
        <taxon>Pseudomonadota</taxon>
        <taxon>Gammaproteobacteria</taxon>
        <taxon>Pseudomonadales</taxon>
        <taxon>Pseudomonadaceae</taxon>
        <taxon>Pseudomonas</taxon>
    </lineage>
</organism>
<evidence type="ECO:0000250" key="1">
    <source>
        <dbReference type="UniProtKB" id="P0DX76"/>
    </source>
</evidence>
<evidence type="ECO:0000255" key="2">
    <source>
        <dbReference type="PROSITE-ProRule" id="PRU01395"/>
    </source>
</evidence>
<evidence type="ECO:0000256" key="3">
    <source>
        <dbReference type="SAM" id="MobiDB-lite"/>
    </source>
</evidence>
<evidence type="ECO:0000269" key="4">
    <source>
    </source>
</evidence>
<evidence type="ECO:0000303" key="5">
    <source>
    </source>
</evidence>
<evidence type="ECO:0000305" key="6"/>
<evidence type="ECO:0000305" key="7">
    <source>
    </source>
</evidence>
<evidence type="ECO:0000312" key="8">
    <source>
        <dbReference type="PDB" id="7TB5"/>
    </source>
</evidence>
<evidence type="ECO:0007829" key="9">
    <source>
        <dbReference type="PDB" id="7TB5"/>
    </source>
</evidence>
<keyword id="KW-0002">3D-structure</keyword>
<keyword id="KW-0051">Antiviral defense</keyword>
<keyword id="KW-0238">DNA-binding</keyword>
<keyword id="KW-0678">Repressor</keyword>
<keyword id="KW-0804">Transcription</keyword>
<keyword id="KW-0805">Transcription regulation</keyword>
<comment type="function">
    <text evidence="4 5 7">Transcriptional regulator of a CBASS antivirus system (Probable). CBASS (cyclic oligonucleotide-based antiphage signaling system) provides immunity against bacteriophage (PubMed:35536256). The CD-NTase protein synthesizes cyclic nucleotides in response to infection; these serve as specific second messenger signals (PubMed:35536256). The signals activate a diverse range of effectors, leading to bacterial cell death and thus abortive phage infection (PubMed:35536256). A type III CBASS system, part of a Cap17-CapW-CdnC-Cap7-Cap6-Cap18 locus (PubMed:35536256). Binds specifically to palindromes that overlap the -10 site in the promoter of cdnC, found between the genes for divergently transcribed capW and cdnC (cognate DNA) (PubMed:35536256). Probably represses transcription bidirectionally from the promoter (PubMed:35536256).</text>
</comment>
<comment type="subunit">
    <text evidence="4">Homodimer (PubMed:35536256).</text>
</comment>
<comment type="induction">
    <text evidence="1">Represses its own transcription.</text>
</comment>
<comment type="domain">
    <text evidence="4">Has an N-terminal winged HTH domain, a central WYL domain and a C-terminal WCX domain; the WYL domain of each subunit reaches into the other subunit to form swapped domains. Crystallization in a pH 5.0 buffer alters the relative positions of the domains, suggesting a mechanism for DNA release.</text>
</comment>
<protein>
    <recommendedName>
        <fullName evidence="6">DNA-binding transcriptional repressor CapW</fullName>
    </recommendedName>
    <alternativeName>
        <fullName evidence="5">CBASS-associated protein with WYL domain</fullName>
        <shortName evidence="5">CapW</shortName>
        <shortName evidence="5">Pa CapW</shortName>
    </alternativeName>
</protein>
<sequence length="299" mass="34543">MTDESKPTDDQPTSKGRQGARWGQERRLEFIDYRLRWDGQINRSSLTDFFGISVPQASLDITEYAKLAESNLEYDTRARVYRATESFKAVFPSSAVERYLDDLLRVAVQPEIPYGSFLGWQSPVAAVPKLGRRLNADIVGVILRAIRETGFIEVFYQSLTDPEGGERMLSPHALVHDGNRWHVRAYCHKRKAFRDFSLTRIKCCKYVGQDRDRADEDYAWNTMVNVVLTPHPGLTPAQRKLIENDFLMEGGEMHVECRRALLLYLLFQLNLNEDQADQRPEVIQLALKNRDEIKDLIQY</sequence>
<reference evidence="8" key="1">
    <citation type="journal article" date="2022" name="Nucleic Acids Res.">
        <title>Control of bacterial immune signaling by a WYL domain transcription factor.</title>
        <authorList>
            <person name="Blankenchip C.L."/>
            <person name="Nguyen J.V."/>
            <person name="Lau R.K."/>
            <person name="Ye Q."/>
            <person name="Gu Y."/>
            <person name="Corbett K.D."/>
        </authorList>
    </citation>
    <scope>X-RAY CRYSTALLOGRAPHY (2.30 ANGSTROMS) AT PH 5.0</scope>
    <scope>PROBABLE FUNCTION AS A TRANSCRIPTIONAL REPRESSOR</scope>
    <scope>SUBUNIT</scope>
    <scope>DNA-BINDING</scope>
    <source>
        <strain>PA17</strain>
    </source>
</reference>
<name>CAPW_PSEAI</name>